<comment type="function">
    <text evidence="1">Involved in DNA repair and in homologous recombination. Binds and assemble on single-stranded DNA to form a nucleoprotein filament. Hydrolyzes ATP in a ssDNA-dependent manner and promotes DNA strand exchange between homologous DNA molecules (By similarity).</text>
</comment>
<comment type="similarity">
    <text evidence="4">Belongs to the eukaryotic RecA-like protein family.</text>
</comment>
<reference key="1">
    <citation type="journal article" date="2006" name="Proc. Natl. Acad. Sci. U.S.A.">
        <title>Genomic analysis of the uncultivated marine crenarchaeote Cenarchaeum symbiosum.</title>
        <authorList>
            <person name="Hallam S.J."/>
            <person name="Konstantinidis K.T."/>
            <person name="Putnam N."/>
            <person name="Schleper C."/>
            <person name="Watanabe Y."/>
            <person name="Sugahara J."/>
            <person name="Preston C."/>
            <person name="de la Torre J."/>
            <person name="Richardson P.M."/>
            <person name="DeLong E.F."/>
        </authorList>
    </citation>
    <scope>NUCLEOTIDE SEQUENCE [LARGE SCALE GENOMIC DNA]</scope>
    <source>
        <strain>A</strain>
    </source>
</reference>
<reference key="2">
    <citation type="journal article" date="1999" name="J. Bacteriol.">
        <title>Diversity of radA genes from cultured and uncultured archaea: comparative analysis of putative RadA proteins and their use as a phylogenetic marker.</title>
        <authorList>
            <person name="Sandler S.J."/>
            <person name="Hugenholtz P."/>
            <person name="Schleper C."/>
            <person name="DeLong E.F."/>
            <person name="Pace N.R."/>
            <person name="Clark A.J."/>
        </authorList>
    </citation>
    <scope>NUCLEOTIDE SEQUENCE [GENOMIC DNA] OF 30-398</scope>
</reference>
<protein>
    <recommendedName>
        <fullName>DNA repair and recombination protein RadA</fullName>
    </recommendedName>
</protein>
<keyword id="KW-0067">ATP-binding</keyword>
<keyword id="KW-0227">DNA damage</keyword>
<keyword id="KW-0233">DNA recombination</keyword>
<keyword id="KW-0238">DNA-binding</keyword>
<keyword id="KW-0547">Nucleotide-binding</keyword>
<keyword id="KW-1185">Reference proteome</keyword>
<sequence>MNIENFDLSDLEGVGPVTKKKLEDSGVHSMMDLVVRGPVELGEISSMSSEICEKIVTIARKRLAETGAITKDFASGSEIYKRRQSIGMITTGTDALDALLGGGIETQAITEVFGEFGSGKTQFCHTMCVTTQKPKEEGGLGGGVMYIDTEGTFRPERVVTIAKANNMDPAKLLDGIIVARAYNSSHQVLILEEAGKTIQEENIKLIISDSTTGLFRSEYLGRGTLASRQQKLGRYIRLLARIAETYNCAVLATNQVSSSPDSFFGDPTRPVGGNVVGHASTYRIYFRKGGKNKRVAKIIDSPHHPASEAVFELGERGVQDTEEHLKQLDKEAKKAEKEAAKPVKKSKAKAKADGPEGVDATPAIEPEGIDTAAAEPEDIGTIVSESADAGEPADPELE</sequence>
<proteinExistence type="inferred from homology"/>
<organism>
    <name type="scientific">Cenarchaeum symbiosum (strain A)</name>
    <dbReference type="NCBI Taxonomy" id="414004"/>
    <lineage>
        <taxon>Archaea</taxon>
        <taxon>Nitrososphaerota</taxon>
        <taxon>Candidatus Cenarchaeales</taxon>
        <taxon>Candidatus Cenarchaeaceae</taxon>
        <taxon>Candidatus Cenarchaeum</taxon>
    </lineage>
</organism>
<gene>
    <name type="primary">radA</name>
    <name type="ordered locus">CENSYa_0250</name>
</gene>
<feature type="chain" id="PRO_0000150090" description="DNA repair and recombination protein RadA">
    <location>
        <begin position="1"/>
        <end position="398"/>
    </location>
</feature>
<feature type="region of interest" description="Disordered" evidence="3">
    <location>
        <begin position="320"/>
        <end position="398"/>
    </location>
</feature>
<feature type="compositionally biased region" description="Basic and acidic residues" evidence="3">
    <location>
        <begin position="320"/>
        <end position="341"/>
    </location>
</feature>
<feature type="binding site" evidence="2">
    <location>
        <begin position="114"/>
        <end position="121"/>
    </location>
    <ligand>
        <name>ATP</name>
        <dbReference type="ChEBI" id="CHEBI:30616"/>
    </ligand>
</feature>
<name>RADA_CENSY</name>
<dbReference type="EMBL" id="DP000238">
    <property type="protein sequence ID" value="ABK76892.1"/>
    <property type="molecule type" value="Genomic_DNA"/>
</dbReference>
<dbReference type="EMBL" id="AF090197">
    <property type="protein sequence ID" value="AAD16063.1"/>
    <property type="molecule type" value="Genomic_DNA"/>
</dbReference>
<dbReference type="SMR" id="O93748"/>
<dbReference type="STRING" id="414004.CENSYa_0250"/>
<dbReference type="EnsemblBacteria" id="ABK76892">
    <property type="protein sequence ID" value="ABK76892"/>
    <property type="gene ID" value="CENSYa_0250"/>
</dbReference>
<dbReference type="KEGG" id="csy:CENSYa_0250"/>
<dbReference type="PATRIC" id="fig|414004.10.peg.217"/>
<dbReference type="HOGENOM" id="CLU_041732_0_0_2"/>
<dbReference type="Proteomes" id="UP000000758">
    <property type="component" value="Chromosome"/>
</dbReference>
<dbReference type="GO" id="GO:0005524">
    <property type="term" value="F:ATP binding"/>
    <property type="evidence" value="ECO:0007669"/>
    <property type="project" value="UniProtKB-UniRule"/>
</dbReference>
<dbReference type="GO" id="GO:0016887">
    <property type="term" value="F:ATP hydrolysis activity"/>
    <property type="evidence" value="ECO:0007669"/>
    <property type="project" value="InterPro"/>
</dbReference>
<dbReference type="GO" id="GO:0140664">
    <property type="term" value="F:ATP-dependent DNA damage sensor activity"/>
    <property type="evidence" value="ECO:0007669"/>
    <property type="project" value="InterPro"/>
</dbReference>
<dbReference type="GO" id="GO:0003684">
    <property type="term" value="F:damaged DNA binding"/>
    <property type="evidence" value="ECO:0007669"/>
    <property type="project" value="UniProtKB-UniRule"/>
</dbReference>
<dbReference type="GO" id="GO:0006310">
    <property type="term" value="P:DNA recombination"/>
    <property type="evidence" value="ECO:0007669"/>
    <property type="project" value="UniProtKB-UniRule"/>
</dbReference>
<dbReference type="GO" id="GO:0006281">
    <property type="term" value="P:DNA repair"/>
    <property type="evidence" value="ECO:0007669"/>
    <property type="project" value="UniProtKB-UniRule"/>
</dbReference>
<dbReference type="CDD" id="cd19515">
    <property type="entry name" value="archRadA"/>
    <property type="match status" value="1"/>
</dbReference>
<dbReference type="FunFam" id="3.40.50.300:FF:002052">
    <property type="entry name" value="DNA repair protein RAD51 homolog"/>
    <property type="match status" value="1"/>
</dbReference>
<dbReference type="Gene3D" id="1.10.150.20">
    <property type="entry name" value="5' to 3' exonuclease, C-terminal subdomain"/>
    <property type="match status" value="1"/>
</dbReference>
<dbReference type="Gene3D" id="3.40.50.300">
    <property type="entry name" value="P-loop containing nucleotide triphosphate hydrolases"/>
    <property type="match status" value="1"/>
</dbReference>
<dbReference type="HAMAP" id="MF_00348">
    <property type="entry name" value="RadA_arch"/>
    <property type="match status" value="1"/>
</dbReference>
<dbReference type="InterPro" id="IPR003593">
    <property type="entry name" value="AAA+_ATPase"/>
</dbReference>
<dbReference type="InterPro" id="IPR013632">
    <property type="entry name" value="DNA_recomb/repair_Rad51_C"/>
</dbReference>
<dbReference type="InterPro" id="IPR011938">
    <property type="entry name" value="DNA_recomb/repair_RadA"/>
</dbReference>
<dbReference type="InterPro" id="IPR010995">
    <property type="entry name" value="DNA_repair_Rad51/TF_NusA_a-hlx"/>
</dbReference>
<dbReference type="InterPro" id="IPR027417">
    <property type="entry name" value="P-loop_NTPase"/>
</dbReference>
<dbReference type="InterPro" id="IPR020588">
    <property type="entry name" value="RecA_ATP-bd"/>
</dbReference>
<dbReference type="InterPro" id="IPR020587">
    <property type="entry name" value="RecA_monomer-monomer_interface"/>
</dbReference>
<dbReference type="NCBIfam" id="NF003301">
    <property type="entry name" value="PRK04301.1"/>
    <property type="match status" value="1"/>
</dbReference>
<dbReference type="NCBIfam" id="TIGR02236">
    <property type="entry name" value="recomb_radA"/>
    <property type="match status" value="1"/>
</dbReference>
<dbReference type="PANTHER" id="PTHR22942:SF30">
    <property type="entry name" value="MEIOTIC RECOMBINATION PROTEIN DMC1_LIM15 HOMOLOG"/>
    <property type="match status" value="1"/>
</dbReference>
<dbReference type="PANTHER" id="PTHR22942">
    <property type="entry name" value="RECA/RAD51/RADA DNA STRAND-PAIRING FAMILY MEMBER"/>
    <property type="match status" value="1"/>
</dbReference>
<dbReference type="Pfam" id="PF08423">
    <property type="entry name" value="Rad51"/>
    <property type="match status" value="1"/>
</dbReference>
<dbReference type="SMART" id="SM00382">
    <property type="entry name" value="AAA"/>
    <property type="match status" value="1"/>
</dbReference>
<dbReference type="SUPFAM" id="SSF52540">
    <property type="entry name" value="P-loop containing nucleoside triphosphate hydrolases"/>
    <property type="match status" value="1"/>
</dbReference>
<dbReference type="SUPFAM" id="SSF47794">
    <property type="entry name" value="Rad51 N-terminal domain-like"/>
    <property type="match status" value="1"/>
</dbReference>
<dbReference type="PROSITE" id="PS50162">
    <property type="entry name" value="RECA_2"/>
    <property type="match status" value="1"/>
</dbReference>
<dbReference type="PROSITE" id="PS50163">
    <property type="entry name" value="RECA_3"/>
    <property type="match status" value="1"/>
</dbReference>
<evidence type="ECO:0000250" key="1"/>
<evidence type="ECO:0000255" key="2"/>
<evidence type="ECO:0000256" key="3">
    <source>
        <dbReference type="SAM" id="MobiDB-lite"/>
    </source>
</evidence>
<evidence type="ECO:0000305" key="4"/>
<accession>O93748</accession>
<accession>A0RU75</accession>